<keyword id="KW-0025">Alternative splicing</keyword>
<keyword id="KW-0597">Phosphoprotein</keyword>
<keyword id="KW-1185">Reference proteome</keyword>
<comment type="alternative products">
    <event type="alternative splicing"/>
    <isoform>
        <id>A1A708-1</id>
        <name>B</name>
        <sequence type="displayed"/>
    </isoform>
    <isoform>
        <id>A1A708-2</id>
        <name>A</name>
        <sequence type="described" ref="VSP_037163"/>
    </isoform>
</comment>
<comment type="sequence caution" evidence="5">
    <conflict type="erroneous initiation">
        <sequence resource="EMBL-CDS" id="AAL28287"/>
    </conflict>
</comment>
<comment type="sequence caution" evidence="5">
    <conflict type="frameshift">
        <sequence resource="EMBL-CDS" id="ABL75717"/>
    </conflict>
</comment>
<feature type="chain" id="PRO_0000372642" description="Uncharacterized protein CG4951">
    <location>
        <begin position="1"/>
        <end position="446"/>
    </location>
</feature>
<feature type="region of interest" description="Disordered" evidence="1">
    <location>
        <begin position="141"/>
        <end position="282"/>
    </location>
</feature>
<feature type="compositionally biased region" description="Polar residues" evidence="1">
    <location>
        <begin position="159"/>
        <end position="170"/>
    </location>
</feature>
<feature type="compositionally biased region" description="Basic and acidic residues" evidence="1">
    <location>
        <begin position="194"/>
        <end position="210"/>
    </location>
</feature>
<feature type="compositionally biased region" description="Low complexity" evidence="1">
    <location>
        <begin position="211"/>
        <end position="221"/>
    </location>
</feature>
<feature type="compositionally biased region" description="Low complexity" evidence="1">
    <location>
        <begin position="229"/>
        <end position="239"/>
    </location>
</feature>
<feature type="compositionally biased region" description="Basic residues" evidence="1">
    <location>
        <begin position="269"/>
        <end position="280"/>
    </location>
</feature>
<feature type="modified residue" description="Phosphoserine" evidence="3">
    <location>
        <position position="200"/>
    </location>
</feature>
<feature type="modified residue" description="Phosphoserine" evidence="3">
    <location>
        <position position="202"/>
    </location>
</feature>
<feature type="modified residue" description="Phosphoserine" evidence="3">
    <location>
        <position position="212"/>
    </location>
</feature>
<feature type="modified residue" description="Phosphoserine" evidence="3">
    <location>
        <position position="214"/>
    </location>
</feature>
<feature type="modified residue" description="Phosphoserine" evidence="3">
    <location>
        <position position="251"/>
    </location>
</feature>
<feature type="modified residue" description="Phosphoserine" evidence="2">
    <location>
        <position position="282"/>
    </location>
</feature>
<feature type="modified residue" description="Phosphoserine" evidence="2">
    <location>
        <position position="307"/>
    </location>
</feature>
<feature type="splice variant" id="VSP_037163" description="In isoform A." evidence="4">
    <location>
        <begin position="321"/>
        <end position="446"/>
    </location>
</feature>
<feature type="sequence conflict" description="In Ref. 3; ABM92844." evidence="5" ref="3">
    <original>A</original>
    <variation>P</variation>
    <location>
        <position position="242"/>
    </location>
</feature>
<feature type="sequence conflict" description="In Ref. 3; ABM92844." evidence="5" ref="3">
    <original>E</original>
    <variation>D</variation>
    <location>
        <position position="265"/>
    </location>
</feature>
<name>Y4951_DROME</name>
<protein>
    <recommendedName>
        <fullName>Uncharacterized protein CG4951</fullName>
    </recommendedName>
</protein>
<proteinExistence type="evidence at protein level"/>
<evidence type="ECO:0000256" key="1">
    <source>
        <dbReference type="SAM" id="MobiDB-lite"/>
    </source>
</evidence>
<evidence type="ECO:0000269" key="2">
    <source>
    </source>
</evidence>
<evidence type="ECO:0000269" key="3">
    <source>
    </source>
</evidence>
<evidence type="ECO:0000303" key="4">
    <source ref="3"/>
</evidence>
<evidence type="ECO:0000305" key="5"/>
<gene>
    <name type="ORF">CG4951</name>
</gene>
<organism>
    <name type="scientific">Drosophila melanogaster</name>
    <name type="common">Fruit fly</name>
    <dbReference type="NCBI Taxonomy" id="7227"/>
    <lineage>
        <taxon>Eukaryota</taxon>
        <taxon>Metazoa</taxon>
        <taxon>Ecdysozoa</taxon>
        <taxon>Arthropoda</taxon>
        <taxon>Hexapoda</taxon>
        <taxon>Insecta</taxon>
        <taxon>Pterygota</taxon>
        <taxon>Neoptera</taxon>
        <taxon>Endopterygota</taxon>
        <taxon>Diptera</taxon>
        <taxon>Brachycera</taxon>
        <taxon>Muscomorpha</taxon>
        <taxon>Ephydroidea</taxon>
        <taxon>Drosophilidae</taxon>
        <taxon>Drosophila</taxon>
        <taxon>Sophophora</taxon>
    </lineage>
</organism>
<dbReference type="EMBL" id="AE014297">
    <property type="protein sequence ID" value="AAF56766.2"/>
    <property type="molecule type" value="Genomic_DNA"/>
</dbReference>
<dbReference type="EMBL" id="AE014297">
    <property type="protein sequence ID" value="ABW08788.1"/>
    <property type="molecule type" value="Genomic_DNA"/>
</dbReference>
<dbReference type="EMBL" id="AY060739">
    <property type="protein sequence ID" value="AAL28287.2"/>
    <property type="status" value="ALT_INIT"/>
    <property type="molecule type" value="mRNA"/>
</dbReference>
<dbReference type="EMBL" id="BT029659">
    <property type="protein sequence ID" value="ABL75717.1"/>
    <property type="status" value="ALT_FRAME"/>
    <property type="molecule type" value="mRNA"/>
</dbReference>
<dbReference type="EMBL" id="BT029681">
    <property type="protein sequence ID" value="ABL75738.1"/>
    <property type="molecule type" value="mRNA"/>
</dbReference>
<dbReference type="EMBL" id="BT029704">
    <property type="protein sequence ID" value="ABL75761.1"/>
    <property type="molecule type" value="mRNA"/>
</dbReference>
<dbReference type="EMBL" id="BT029719">
    <property type="protein sequence ID" value="ABL75776.1"/>
    <property type="molecule type" value="mRNA"/>
</dbReference>
<dbReference type="EMBL" id="BT029970">
    <property type="protein sequence ID" value="ABM92844.1"/>
    <property type="molecule type" value="mRNA"/>
</dbReference>
<dbReference type="EMBL" id="BT030265">
    <property type="protein sequence ID" value="ABN49404.1"/>
    <property type="molecule type" value="mRNA"/>
</dbReference>
<dbReference type="RefSeq" id="NP_001097950.1">
    <molecule id="A1A708-1"/>
    <property type="nucleotide sequence ID" value="NM_001104480.2"/>
</dbReference>
<dbReference type="RefSeq" id="NP_651602.1">
    <molecule id="A1A708-2"/>
    <property type="nucleotide sequence ID" value="NM_143345.2"/>
</dbReference>
<dbReference type="BioGRID" id="68236">
    <property type="interactions" value="6"/>
</dbReference>
<dbReference type="FunCoup" id="A1A708">
    <property type="interactions" value="19"/>
</dbReference>
<dbReference type="IntAct" id="A1A708">
    <property type="interactions" value="6"/>
</dbReference>
<dbReference type="GlyGen" id="A1A708">
    <property type="glycosylation" value="1 site"/>
</dbReference>
<dbReference type="iPTMnet" id="A1A708"/>
<dbReference type="PaxDb" id="7227-FBpp0112210"/>
<dbReference type="DNASU" id="43355"/>
<dbReference type="EnsemblMetazoa" id="FBtr0085265">
    <molecule id="A1A708-2"/>
    <property type="protein sequence ID" value="FBpp0084634"/>
    <property type="gene ID" value="FBgn0039563"/>
</dbReference>
<dbReference type="EnsemblMetazoa" id="FBtr0113298">
    <molecule id="A1A708-1"/>
    <property type="protein sequence ID" value="FBpp0112210"/>
    <property type="gene ID" value="FBgn0039563"/>
</dbReference>
<dbReference type="GeneID" id="43355"/>
<dbReference type="KEGG" id="dme:Dmel_CG4951"/>
<dbReference type="UCSC" id="CG4951-RA">
    <property type="organism name" value="d. melanogaster"/>
</dbReference>
<dbReference type="UCSC" id="CG4951-RB">
    <molecule id="A1A708-1"/>
    <property type="organism name" value="d. melanogaster"/>
</dbReference>
<dbReference type="AGR" id="FB:FBgn0039563"/>
<dbReference type="FlyBase" id="FBgn0039563">
    <property type="gene designation" value="CG4951"/>
</dbReference>
<dbReference type="VEuPathDB" id="VectorBase:FBgn0039563"/>
<dbReference type="eggNOG" id="ENOG502TBUA">
    <property type="taxonomic scope" value="Eukaryota"/>
</dbReference>
<dbReference type="HOGENOM" id="CLU_047757_0_0_1"/>
<dbReference type="InParanoid" id="A1A708"/>
<dbReference type="OMA" id="NYMSIDH"/>
<dbReference type="OrthoDB" id="8008330at2759"/>
<dbReference type="PhylomeDB" id="A1A708"/>
<dbReference type="BioGRID-ORCS" id="43355">
    <property type="hits" value="0 hits in 1 CRISPR screen"/>
</dbReference>
<dbReference type="ChiTaRS" id="CG4951">
    <property type="organism name" value="fly"/>
</dbReference>
<dbReference type="GenomeRNAi" id="43355"/>
<dbReference type="PRO" id="PR:A1A708"/>
<dbReference type="Proteomes" id="UP000000803">
    <property type="component" value="Chromosome 3R"/>
</dbReference>
<dbReference type="Bgee" id="FBgn0039563">
    <property type="expression patterns" value="Expressed in adult enteroendocrine precursor cell in adult midgut (Drosophila) and 92 other cell types or tissues"/>
</dbReference>
<sequence length="446" mass="50753">MSFSAIGDCQLISQLYQYKKHRVICSVKVLPTPVTHFERESKNDFHWMTADRWSRIECGLWRLFENLKQWQDAYQLDTELIIDHIIVRVQATNKSHPATVALLAGTESSSKDLCLDLQLQYITQEDTTIVDVIPAKRELATEAETNGTRPTSRKIRVANSGSKPKAGTQSKPKHIDADNEDDKSSTTASQPTKIKSERRSISQGGEKDKASSSSPSSSQQSNRIKRSHSPSQQNSRSSSVEAKPARRSGRSPIRPSRFKNFVVGETRSGKSRGPKPKVKRVSPVPAKDFKVEHMDGGRFNALQRLDSMLDTPKPREVKILLLEKMGEDEVLNTFENYRSDFDKLFKEREFKPRTSHYMNIAHMDVIDILSKSIHQQMLKKLGEVYSSRSNHTSLLVNGLLPLWIVRLFMDTYTLSQSEAVQQIRDQMKYNTYLRALNDEPLSSDLD</sequence>
<accession>A1A708</accession>
<accession>A1A6Y7</accession>
<accession>A1A731</accession>
<accession>A2RVH9</accession>
<accession>Q7K2Q3</accession>
<accession>Q95SK4</accession>
<accession>Q9VAY1</accession>
<reference key="1">
    <citation type="journal article" date="2000" name="Science">
        <title>The genome sequence of Drosophila melanogaster.</title>
        <authorList>
            <person name="Adams M.D."/>
            <person name="Celniker S.E."/>
            <person name="Holt R.A."/>
            <person name="Evans C.A."/>
            <person name="Gocayne J.D."/>
            <person name="Amanatides P.G."/>
            <person name="Scherer S.E."/>
            <person name="Li P.W."/>
            <person name="Hoskins R.A."/>
            <person name="Galle R.F."/>
            <person name="George R.A."/>
            <person name="Lewis S.E."/>
            <person name="Richards S."/>
            <person name="Ashburner M."/>
            <person name="Henderson S.N."/>
            <person name="Sutton G.G."/>
            <person name="Wortman J.R."/>
            <person name="Yandell M.D."/>
            <person name="Zhang Q."/>
            <person name="Chen L.X."/>
            <person name="Brandon R.C."/>
            <person name="Rogers Y.-H.C."/>
            <person name="Blazej R.G."/>
            <person name="Champe M."/>
            <person name="Pfeiffer B.D."/>
            <person name="Wan K.H."/>
            <person name="Doyle C."/>
            <person name="Baxter E.G."/>
            <person name="Helt G."/>
            <person name="Nelson C.R."/>
            <person name="Miklos G.L.G."/>
            <person name="Abril J.F."/>
            <person name="Agbayani A."/>
            <person name="An H.-J."/>
            <person name="Andrews-Pfannkoch C."/>
            <person name="Baldwin D."/>
            <person name="Ballew R.M."/>
            <person name="Basu A."/>
            <person name="Baxendale J."/>
            <person name="Bayraktaroglu L."/>
            <person name="Beasley E.M."/>
            <person name="Beeson K.Y."/>
            <person name="Benos P.V."/>
            <person name="Berman B.P."/>
            <person name="Bhandari D."/>
            <person name="Bolshakov S."/>
            <person name="Borkova D."/>
            <person name="Botchan M.R."/>
            <person name="Bouck J."/>
            <person name="Brokstein P."/>
            <person name="Brottier P."/>
            <person name="Burtis K.C."/>
            <person name="Busam D.A."/>
            <person name="Butler H."/>
            <person name="Cadieu E."/>
            <person name="Center A."/>
            <person name="Chandra I."/>
            <person name="Cherry J.M."/>
            <person name="Cawley S."/>
            <person name="Dahlke C."/>
            <person name="Davenport L.B."/>
            <person name="Davies P."/>
            <person name="de Pablos B."/>
            <person name="Delcher A."/>
            <person name="Deng Z."/>
            <person name="Mays A.D."/>
            <person name="Dew I."/>
            <person name="Dietz S.M."/>
            <person name="Dodson K."/>
            <person name="Doup L.E."/>
            <person name="Downes M."/>
            <person name="Dugan-Rocha S."/>
            <person name="Dunkov B.C."/>
            <person name="Dunn P."/>
            <person name="Durbin K.J."/>
            <person name="Evangelista C.C."/>
            <person name="Ferraz C."/>
            <person name="Ferriera S."/>
            <person name="Fleischmann W."/>
            <person name="Fosler C."/>
            <person name="Gabrielian A.E."/>
            <person name="Garg N.S."/>
            <person name="Gelbart W.M."/>
            <person name="Glasser K."/>
            <person name="Glodek A."/>
            <person name="Gong F."/>
            <person name="Gorrell J.H."/>
            <person name="Gu Z."/>
            <person name="Guan P."/>
            <person name="Harris M."/>
            <person name="Harris N.L."/>
            <person name="Harvey D.A."/>
            <person name="Heiman T.J."/>
            <person name="Hernandez J.R."/>
            <person name="Houck J."/>
            <person name="Hostin D."/>
            <person name="Houston K.A."/>
            <person name="Howland T.J."/>
            <person name="Wei M.-H."/>
            <person name="Ibegwam C."/>
            <person name="Jalali M."/>
            <person name="Kalush F."/>
            <person name="Karpen G.H."/>
            <person name="Ke Z."/>
            <person name="Kennison J.A."/>
            <person name="Ketchum K.A."/>
            <person name="Kimmel B.E."/>
            <person name="Kodira C.D."/>
            <person name="Kraft C.L."/>
            <person name="Kravitz S."/>
            <person name="Kulp D."/>
            <person name="Lai Z."/>
            <person name="Lasko P."/>
            <person name="Lei Y."/>
            <person name="Levitsky A.A."/>
            <person name="Li J.H."/>
            <person name="Li Z."/>
            <person name="Liang Y."/>
            <person name="Lin X."/>
            <person name="Liu X."/>
            <person name="Mattei B."/>
            <person name="McIntosh T.C."/>
            <person name="McLeod M.P."/>
            <person name="McPherson D."/>
            <person name="Merkulov G."/>
            <person name="Milshina N.V."/>
            <person name="Mobarry C."/>
            <person name="Morris J."/>
            <person name="Moshrefi A."/>
            <person name="Mount S.M."/>
            <person name="Moy M."/>
            <person name="Murphy B."/>
            <person name="Murphy L."/>
            <person name="Muzny D.M."/>
            <person name="Nelson D.L."/>
            <person name="Nelson D.R."/>
            <person name="Nelson K.A."/>
            <person name="Nixon K."/>
            <person name="Nusskern D.R."/>
            <person name="Pacleb J.M."/>
            <person name="Palazzolo M."/>
            <person name="Pittman G.S."/>
            <person name="Pan S."/>
            <person name="Pollard J."/>
            <person name="Puri V."/>
            <person name="Reese M.G."/>
            <person name="Reinert K."/>
            <person name="Remington K."/>
            <person name="Saunders R.D.C."/>
            <person name="Scheeler F."/>
            <person name="Shen H."/>
            <person name="Shue B.C."/>
            <person name="Siden-Kiamos I."/>
            <person name="Simpson M."/>
            <person name="Skupski M.P."/>
            <person name="Smith T.J."/>
            <person name="Spier E."/>
            <person name="Spradling A.C."/>
            <person name="Stapleton M."/>
            <person name="Strong R."/>
            <person name="Sun E."/>
            <person name="Svirskas R."/>
            <person name="Tector C."/>
            <person name="Turner R."/>
            <person name="Venter E."/>
            <person name="Wang A.H."/>
            <person name="Wang X."/>
            <person name="Wang Z.-Y."/>
            <person name="Wassarman D.A."/>
            <person name="Weinstock G.M."/>
            <person name="Weissenbach J."/>
            <person name="Williams S.M."/>
            <person name="Woodage T."/>
            <person name="Worley K.C."/>
            <person name="Wu D."/>
            <person name="Yang S."/>
            <person name="Yao Q.A."/>
            <person name="Ye J."/>
            <person name="Yeh R.-F."/>
            <person name="Zaveri J.S."/>
            <person name="Zhan M."/>
            <person name="Zhang G."/>
            <person name="Zhao Q."/>
            <person name="Zheng L."/>
            <person name="Zheng X.H."/>
            <person name="Zhong F.N."/>
            <person name="Zhong W."/>
            <person name="Zhou X."/>
            <person name="Zhu S.C."/>
            <person name="Zhu X."/>
            <person name="Smith H.O."/>
            <person name="Gibbs R.A."/>
            <person name="Myers E.W."/>
            <person name="Rubin G.M."/>
            <person name="Venter J.C."/>
        </authorList>
    </citation>
    <scope>NUCLEOTIDE SEQUENCE [LARGE SCALE GENOMIC DNA]</scope>
    <source>
        <strain>Berkeley</strain>
    </source>
</reference>
<reference key="2">
    <citation type="journal article" date="2002" name="Genome Biol.">
        <title>Annotation of the Drosophila melanogaster euchromatic genome: a systematic review.</title>
        <authorList>
            <person name="Misra S."/>
            <person name="Crosby M.A."/>
            <person name="Mungall C.J."/>
            <person name="Matthews B.B."/>
            <person name="Campbell K.S."/>
            <person name="Hradecky P."/>
            <person name="Huang Y."/>
            <person name="Kaminker J.S."/>
            <person name="Millburn G.H."/>
            <person name="Prochnik S.E."/>
            <person name="Smith C.D."/>
            <person name="Tupy J.L."/>
            <person name="Whitfield E.J."/>
            <person name="Bayraktaroglu L."/>
            <person name="Berman B.P."/>
            <person name="Bettencourt B.R."/>
            <person name="Celniker S.E."/>
            <person name="de Grey A.D.N.J."/>
            <person name="Drysdale R.A."/>
            <person name="Harris N.L."/>
            <person name="Richter J."/>
            <person name="Russo S."/>
            <person name="Schroeder A.J."/>
            <person name="Shu S.Q."/>
            <person name="Stapleton M."/>
            <person name="Yamada C."/>
            <person name="Ashburner M."/>
            <person name="Gelbart W.M."/>
            <person name="Rubin G.M."/>
            <person name="Lewis S.E."/>
        </authorList>
    </citation>
    <scope>GENOME REANNOTATION</scope>
    <scope>ALTERNATIVE SPLICING</scope>
    <source>
        <strain>Berkeley</strain>
    </source>
</reference>
<reference key="3">
    <citation type="submission" date="2006-12" db="EMBL/GenBank/DDBJ databases">
        <authorList>
            <person name="Stapleton M."/>
            <person name="Carlson J.W."/>
            <person name="Frise E."/>
            <person name="Kapadia B."/>
            <person name="Park S."/>
            <person name="Wan K.H."/>
            <person name="Yu C."/>
            <person name="Celniker S.E."/>
        </authorList>
    </citation>
    <scope>NUCLEOTIDE SEQUENCE [LARGE SCALE MRNA] (ISOFORMS A AND B)</scope>
    <source>
        <strain>Berkeley</strain>
        <tissue>Head</tissue>
    </source>
</reference>
<reference key="4">
    <citation type="journal article" date="2007" name="Mol. Biosyst.">
        <title>An integrated chemical, mass spectrometric and computational strategy for (quantitative) phosphoproteomics: application to Drosophila melanogaster Kc167 cells.</title>
        <authorList>
            <person name="Bodenmiller B."/>
            <person name="Mueller L.N."/>
            <person name="Pedrioli P.G.A."/>
            <person name="Pflieger D."/>
            <person name="Juenger M.A."/>
            <person name="Eng J.K."/>
            <person name="Aebersold R."/>
            <person name="Tao W.A."/>
        </authorList>
    </citation>
    <scope>PHOSPHORYLATION [LARGE SCALE ANALYSIS] AT SER-282 AND SER-307</scope>
    <scope>IDENTIFICATION BY MASS SPECTROMETRY</scope>
</reference>
<reference key="5">
    <citation type="journal article" date="2008" name="J. Proteome Res.">
        <title>Phosphoproteome analysis of Drosophila melanogaster embryos.</title>
        <authorList>
            <person name="Zhai B."/>
            <person name="Villen J."/>
            <person name="Beausoleil S.A."/>
            <person name="Mintseris J."/>
            <person name="Gygi S.P."/>
        </authorList>
    </citation>
    <scope>PHOSPHORYLATION [LARGE SCALE ANALYSIS] AT SER-200; SER-202; SER-212; SER-214 AND SER-251</scope>
    <scope>IDENTIFICATION BY MASS SPECTROMETRY</scope>
    <source>
        <tissue>Embryo</tissue>
    </source>
</reference>